<gene>
    <name evidence="10" type="primary">GHR1</name>
    <name evidence="11" type="synonym">RCD7</name>
    <name evidence="15" type="ordered locus">At4g20940</name>
    <name evidence="16" type="ORF">T13K14.100</name>
</gene>
<protein>
    <recommendedName>
        <fullName evidence="10">LRR receptor-like serine/threonine-protein kinase GHR1</fullName>
        <ecNumber evidence="6">2.7.11.1</ecNumber>
    </recommendedName>
    <alternativeName>
        <fullName evidence="10">Protein GUARD CELL HYDROGEN PEROXIDE-RESISTANT 1</fullName>
        <shortName evidence="10">AtGHR1</shortName>
    </alternativeName>
    <alternativeName>
        <fullName evidence="11">Protein RADICAL-INDUCED CELL DEATH 7</fullName>
    </alternativeName>
</protein>
<sequence>MNLSRILLLSMFFLSAMGQLPSQDIMALLEFKKGIKHDPTGFVLNSWNDESIDFNGCPSSWNGIVCNGGNVAGVVLDNLGLTADADFSLFSNLTKLVKLSMSNNSLSGVLPNDLGSFKSLQFLDLSDNLFSSSLPKEIGRSVSLRNLSLSGNNFSGEIPESMGGLISLQSLDMSSNSLSGPLPKSLTRLNDLLYLNLSSNGFTGKMPRGFELISSLEVLDLHGNSIDGNLDGEFFLLTNASYVDISGNRLVTTSGKLLPGVSESIKHLNLSHNQLEGSLTSGFQLFQNLKVLDLSYNMLSGELPGFNYVYDLEVLKLSNNRFSGSLPNNLLKGDSLLLTTLDLSGNNLSGPVSSIMSTTLHTLDLSSNSLTGELPLLTGGCVLLDLSNNQFEGNLTRWSKWENIEYLDLSQNHFTGSFPDATPQLLRANHLNLSYNKLTGSLPERIPTHYPKLRVLDISSNSLEGPIPGALLSMPTLEEIHLQNNGMTGNIGPLPSSGSRIRLLDLSHNRFDGDLPGVFGSLTNLQVLNLAANNLSGSLPSSMNDIVSLSSLDVSQNHFTGPLPSNLSSNIMAFNVSYNDLSGTVPENLKNFPPPSFYPGNSKLVLPAGSPGSSASEASKNKSTNKLVKVVIIVSCAVALIILILVAILLFCICKSRRREERSITGKETNRRAQTIPSGSGGGMVVSAEDLVASRKGSSSEILSPDEKLAVATGFSPSKTSNLSWSPGSGDSFPADQQLARLDVRSPDRLVGELHFLDDSIKLTPEELSRAPAEVLGRSSHGTSYRATLDNGVFLTVKWLREGVAKQRKEFAKEVKKFSNIRHPNVVTLRGYYWGPTQHEKLILSDYISPGSLASFLYDRPGRKGPPLAWTQRLKIAVDVARGLNYLHFDRAVPHGNLKATNILLDGAELNARVADYCLHRLMTQAGTVEQILDAGILGYRAPELAASRKPLPSFKSDVYAFGVILLEILTGRCAGDVITGEQEGVDLTDWVRLRVAEGRGAECFDSVLTQEMGSDPVTEKGMKEVLGIALRCIRSVSERPGIKTIYEDLSSI</sequence>
<accession>C0LGQ9</accession>
<accession>F4JIJ5</accession>
<accession>Q9SUB9</accession>
<accession>T1T4Z8</accession>
<feature type="signal peptide" evidence="1">
    <location>
        <begin position="1"/>
        <end position="18"/>
    </location>
</feature>
<feature type="chain" id="PRO_0000387555" description="LRR receptor-like serine/threonine-protein kinase GHR1">
    <location>
        <begin position="19"/>
        <end position="1053"/>
    </location>
</feature>
<feature type="topological domain" description="Extracellular" evidence="12">
    <location>
        <begin position="19"/>
        <end position="630"/>
    </location>
</feature>
<feature type="transmembrane region" description="Helical" evidence="1">
    <location>
        <begin position="631"/>
        <end position="651"/>
    </location>
</feature>
<feature type="topological domain" description="Cytoplasmic" evidence="12">
    <location>
        <begin position="652"/>
        <end position="1053"/>
    </location>
</feature>
<feature type="repeat" description="LRR 1" evidence="1">
    <location>
        <begin position="73"/>
        <end position="93"/>
    </location>
</feature>
<feature type="repeat" description="LRR 2" evidence="1">
    <location>
        <begin position="94"/>
        <end position="119"/>
    </location>
</feature>
<feature type="repeat" description="LRR 3" evidence="1">
    <location>
        <begin position="121"/>
        <end position="141"/>
    </location>
</feature>
<feature type="repeat" description="LRR 4" evidence="1">
    <location>
        <begin position="142"/>
        <end position="165"/>
    </location>
</feature>
<feature type="repeat" description="LRR 5" evidence="1">
    <location>
        <begin position="166"/>
        <end position="189"/>
    </location>
</feature>
<feature type="repeat" description="LRR 6" evidence="1">
    <location>
        <begin position="191"/>
        <end position="212"/>
    </location>
</feature>
<feature type="repeat" description="LRR 7" evidence="1">
    <location>
        <begin position="213"/>
        <end position="237"/>
    </location>
</feature>
<feature type="repeat" description="LRR 8" evidence="1">
    <location>
        <begin position="239"/>
        <end position="260"/>
    </location>
</feature>
<feature type="repeat" description="LRR 9" evidence="1">
    <location>
        <begin position="262"/>
        <end position="285"/>
    </location>
</feature>
<feature type="repeat" description="LRR 10" evidence="1">
    <location>
        <begin position="286"/>
        <end position="309"/>
    </location>
</feature>
<feature type="repeat" description="LRR 11" evidence="1">
    <location>
        <begin position="310"/>
        <end position="333"/>
    </location>
</feature>
<feature type="repeat" description="LRR 12" evidence="1">
    <location>
        <begin position="335"/>
        <end position="357"/>
    </location>
</feature>
<feature type="repeat" description="LRR 13" evidence="1">
    <location>
        <begin position="358"/>
        <end position="384"/>
    </location>
</feature>
<feature type="repeat" description="LRR 14" evidence="1">
    <location>
        <begin position="401"/>
        <end position="425"/>
    </location>
</feature>
<feature type="repeat" description="LRR 15" evidence="1">
    <location>
        <begin position="426"/>
        <end position="449"/>
    </location>
</feature>
<feature type="repeat" description="LRR 16" evidence="1">
    <location>
        <begin position="450"/>
        <end position="474"/>
    </location>
</feature>
<feature type="repeat" description="LRR 17" evidence="1">
    <location>
        <begin position="476"/>
        <end position="498"/>
    </location>
</feature>
<feature type="repeat" description="LRR 18" evidence="1">
    <location>
        <begin position="499"/>
        <end position="521"/>
    </location>
</feature>
<feature type="repeat" description="LRR 19" evidence="1">
    <location>
        <begin position="522"/>
        <end position="546"/>
    </location>
</feature>
<feature type="repeat" description="LRR 20" evidence="1">
    <location>
        <begin position="548"/>
        <end position="570"/>
    </location>
</feature>
<feature type="repeat" description="LRR 21" evidence="1">
    <location>
        <begin position="572"/>
        <end position="592"/>
    </location>
</feature>
<feature type="domain" description="Protein kinase" evidence="2">
    <location>
        <begin position="770"/>
        <end position="1053"/>
    </location>
</feature>
<feature type="region of interest" description="Disordered" evidence="4">
    <location>
        <begin position="662"/>
        <end position="684"/>
    </location>
</feature>
<feature type="compositionally biased region" description="Basic and acidic residues" evidence="4">
    <location>
        <begin position="662"/>
        <end position="671"/>
    </location>
</feature>
<feature type="binding site" evidence="2">
    <location>
        <begin position="776"/>
        <end position="784"/>
    </location>
    <ligand>
        <name>ATP</name>
        <dbReference type="ChEBI" id="CHEBI:30616"/>
    </ligand>
</feature>
<feature type="binding site" evidence="2">
    <location>
        <position position="798"/>
    </location>
    <ligand>
        <name>ATP</name>
        <dbReference type="ChEBI" id="CHEBI:30616"/>
    </ligand>
</feature>
<feature type="modified residue" description="Phosphoserine; by HT1" evidence="9">
    <location>
        <position position="100"/>
    </location>
</feature>
<feature type="modified residue" description="Phosphoserine; by HT1" evidence="9">
    <location>
        <position position="102"/>
    </location>
</feature>
<feature type="modified residue" description="Phosphoserine; by HT1" evidence="9">
    <location>
        <position position="105"/>
    </location>
</feature>
<feature type="modified residue" description="Phosphoserine; by HT1" evidence="9">
    <location>
        <position position="126"/>
    </location>
</feature>
<feature type="modified residue" description="Phosphoserine; by HT1" evidence="9">
    <location>
        <position position="262"/>
    </location>
</feature>
<feature type="modified residue" description="Phosphoserine; by HT1" evidence="9">
    <location>
        <position position="278"/>
    </location>
</feature>
<feature type="modified residue" description="Phosphothreonine; by HT1" evidence="9">
    <location>
        <position position="280"/>
    </location>
</feature>
<feature type="modified residue" description="Phosphoserine; by HT1" evidence="9">
    <location>
        <position position="281"/>
    </location>
</feature>
<feature type="modified residue" description="Phosphoserine; by HT1" evidence="9">
    <location>
        <position position="325"/>
    </location>
</feature>
<feature type="modified residue" description="Phosphotyrosine; by HT1" evidence="9">
    <location>
        <position position="406"/>
    </location>
</feature>
<feature type="modified residue" description="Phosphoserine; by HT1" evidence="9">
    <location>
        <position position="410"/>
    </location>
</feature>
<feature type="modified residue" description="Phosphothreonine; by HT1" evidence="9">
    <location>
        <position position="415"/>
    </location>
</feature>
<feature type="modified residue" description="Phosphoserine; by HT1" evidence="9">
    <location>
        <position position="417"/>
    </location>
</feature>
<feature type="modified residue" description="Phosphoserine; by HT1" evidence="9">
    <location>
        <position position="434"/>
    </location>
</feature>
<feature type="modified residue" description="Phosphoserine; by HT1" evidence="9">
    <location>
        <position position="613"/>
    </location>
</feature>
<feature type="modified residue" description="Phosphoserine; by HT1" evidence="9">
    <location>
        <position position="614"/>
    </location>
</feature>
<feature type="modified residue" description="Phosphoserine; by HT1" evidence="9">
    <location>
        <position position="616"/>
    </location>
</feature>
<feature type="modified residue" description="Phosphothreonine; by HT1" evidence="9">
    <location>
        <position position="669"/>
    </location>
</feature>
<feature type="modified residue" description="Phosphothreonine; by HT1" evidence="9">
    <location>
        <position position="675"/>
    </location>
</feature>
<feature type="modified residue" description="Phosphoserine; by HT1" evidence="9">
    <location>
        <position position="678"/>
    </location>
</feature>
<feature type="modified residue" description="Phosphoserine; by HT1" evidence="9">
    <location>
        <position position="680"/>
    </location>
</feature>
<feature type="modified residue" description="Phosphoserine; by HT1" evidence="9">
    <location>
        <position position="698"/>
    </location>
</feature>
<feature type="modified residue" description="Phosphoserine; by HT1" evidence="9">
    <location>
        <position position="699"/>
    </location>
</feature>
<feature type="modified residue" description="Phosphoserine; by HT1" evidence="9">
    <location>
        <position position="700"/>
    </location>
</feature>
<feature type="modified residue" description="Phosphoserine" evidence="5">
    <location>
        <position position="704"/>
    </location>
</feature>
<feature type="modified residue" description="Phosphothreonine; by HT1" evidence="9">
    <location>
        <position position="713"/>
    </location>
</feature>
<feature type="modified residue" description="Phosphoserine; by HT1" evidence="9">
    <location>
        <position position="716"/>
    </location>
</feature>
<feature type="modified residue" description="Phosphoserine; by HT1" evidence="9">
    <location>
        <position position="718"/>
    </location>
</feature>
<feature type="modified residue" description="Phosphothreonine; by HT1" evidence="9">
    <location>
        <position position="720"/>
    </location>
</feature>
<feature type="modified residue" description="Phosphoserine; by HT1" evidence="9">
    <location>
        <position position="721"/>
    </location>
</feature>
<feature type="modified residue" description="Phosphoserine; by HT1" evidence="9">
    <location>
        <position position="724"/>
    </location>
</feature>
<feature type="modified residue" description="Phosphoserine; by HT1" evidence="9">
    <location>
        <position position="760"/>
    </location>
</feature>
<feature type="modified residue" description="Phosphothreonine; by HT1" evidence="9">
    <location>
        <position position="764"/>
    </location>
</feature>
<feature type="modified residue" description="Phosphoserine; by HT1" evidence="9">
    <location>
        <position position="769"/>
    </location>
</feature>
<feature type="modified residue" description="Phosphothreonine; by HT1" evidence="9">
    <location>
        <position position="928"/>
    </location>
</feature>
<feature type="modified residue" description="Phosphothreonine; by HT1" evidence="9">
    <location>
        <position position="1010"/>
    </location>
</feature>
<feature type="modified residue" description="Phosphoserine; by HT1" evidence="9">
    <location>
        <position position="1015"/>
    </location>
</feature>
<feature type="modified residue" description="Phosphothreonine; by HT1" evidence="9">
    <location>
        <position position="1045"/>
    </location>
</feature>
<feature type="modified residue" description="Phosphotyrosine; by HT1" evidence="9">
    <location>
        <position position="1047"/>
    </location>
</feature>
<feature type="modified residue" description="Phosphoserine; by HT1" evidence="9">
    <location>
        <position position="1051"/>
    </location>
</feature>
<feature type="modified residue" description="Phosphoserine; by HT1" evidence="9">
    <location>
        <position position="1052"/>
    </location>
</feature>
<feature type="glycosylation site" description="N-linked (GlcNAc...) asparagine" evidence="3">
    <location>
        <position position="92"/>
    </location>
</feature>
<feature type="glycosylation site" description="N-linked (GlcNAc...) asparagine" evidence="3">
    <location>
        <position position="103"/>
    </location>
</feature>
<feature type="glycosylation site" description="N-linked (GlcNAc...) asparagine" evidence="3">
    <location>
        <position position="146"/>
    </location>
</feature>
<feature type="glycosylation site" description="N-linked (GlcNAc...) asparagine" evidence="3">
    <location>
        <position position="153"/>
    </location>
</feature>
<feature type="glycosylation site" description="N-linked (GlcNAc...) asparagine" evidence="3">
    <location>
        <position position="196"/>
    </location>
</feature>
<feature type="glycosylation site" description="N-linked (GlcNAc...) asparagine" evidence="3">
    <location>
        <position position="239"/>
    </location>
</feature>
<feature type="glycosylation site" description="N-linked (GlcNAc...) asparagine" evidence="3">
    <location>
        <position position="269"/>
    </location>
</feature>
<feature type="glycosylation site" description="N-linked (GlcNAc...) asparagine" evidence="3">
    <location>
        <position position="347"/>
    </location>
</feature>
<feature type="glycosylation site" description="N-linked (GlcNAc...) asparagine" evidence="3">
    <location>
        <position position="394"/>
    </location>
</feature>
<feature type="glycosylation site" description="N-linked (GlcNAc...) asparagine" evidence="3">
    <location>
        <position position="432"/>
    </location>
</feature>
<feature type="glycosylation site" description="N-linked (GlcNAc...) asparagine" evidence="3">
    <location>
        <position position="534"/>
    </location>
</feature>
<feature type="glycosylation site" description="N-linked (GlcNAc...) asparagine" evidence="3">
    <location>
        <position position="566"/>
    </location>
</feature>
<feature type="glycosylation site" description="N-linked (GlcNAc...) asparagine" evidence="3">
    <location>
        <position position="575"/>
    </location>
</feature>
<feature type="glycosylation site" description="N-linked (GlcNAc...) asparagine" evidence="3">
    <location>
        <position position="621"/>
    </location>
</feature>
<feature type="mutagenesis site" description="In ghr1-13; apoplastic ROS-sensitive plants exhibiting increased tissue damage when exposed to ozone (O3) and slightly higher steady-state stomatal conductance; when associated with N-220." evidence="9">
    <original>G</original>
    <variation>D</variation>
    <location>
        <position position="56"/>
    </location>
</feature>
<feature type="mutagenesis site" description="Abolishes the capacity to complement the water loss phenotype of the ghr1 mutant." evidence="6">
    <original>C</original>
    <variation>A</variation>
    <location>
        <position position="57"/>
    </location>
</feature>
<feature type="mutagenesis site" description="In ghr1-12; apoplastic ROS-sensitive plants exhibiting increased tissue damage when exposed to ozone (O3). Slightly higher steady-state stomatal conductance." evidence="9">
    <original>G</original>
    <variation>D</variation>
    <location>
        <position position="63"/>
    </location>
</feature>
<feature type="mutagenesis site" description="Abolishes the capacity to complement the water loss phenotype of the ghr1 mutant." evidence="6">
    <original>C</original>
    <variation>A</variation>
    <location>
        <position position="66"/>
    </location>
</feature>
<feature type="mutagenesis site" description="In ghr1-7; apoplastic ROS-sensitive plants exhibiting increased tissue damage when exposed to ozone (O3). Slightly higher steady-state stomatal conductance." evidence="9">
    <original>G</original>
    <variation>D</variation>
    <location>
        <position position="108"/>
    </location>
</feature>
<feature type="mutagenesis site" description="In ghr1-13; apoplastic ROS-sensitive plants exhibiting increased tissue damage when exposed to ozone (O3) and slightly higher steady-state stomatal conductance; when associated with D-56." evidence="9">
    <original>D</original>
    <variation>N</variation>
    <location>
        <position position="220"/>
    </location>
</feature>
<feature type="mutagenesis site" description="In ghr1-8; apoplastic ROS-sensitive plants exhibiting increased tissue damage when exposed to ozone (O3). Slightly higher steady-state stomatal conductance." evidence="9">
    <original>D</original>
    <variation>N</variation>
    <location>
        <position position="293"/>
    </location>
</feature>
<feature type="mutagenesis site" description="No effect on the capacity to complement the water loss phenotype of the ghr1 mutant." evidence="6">
    <original>C</original>
    <variation>A</variation>
    <location>
        <position position="381"/>
    </location>
</feature>
<feature type="mutagenesis site" description="In ghr1-2/rcd7 and ghr1-10; apoplastic ROS-sensitive plants exhibiting increased tissue damage when exposed to ozone (O3). Slightly higher steady-state stomatal conductance." evidence="9">
    <original>A</original>
    <variation>T</variation>
    <location>
        <position position="618"/>
    </location>
</feature>
<feature type="mutagenesis site" description="In ghr1-15; apoplastic ROS-sensitive plants exhibiting increased tissue damage when exposed to ozone (O3). Slightly higher steady-state stomatal conductance." evidence="9">
    <original>A</original>
    <variation>V</variation>
    <location>
        <position position="637"/>
    </location>
</feature>
<feature type="mutagenesis site" description="In ghr1-16; apoplastic ROS-sensitive plants exhibiting increased tissue damage when exposed to ozone (O3). Slightly higher steady-state stomatal conductance." evidence="9">
    <original>S</original>
    <variation>N</variation>
    <location>
        <position position="680"/>
    </location>
</feature>
<feature type="mutagenesis site" description="Loss of phosphorylation activity on SLAC1." evidence="6">
    <original>K</original>
    <variation>E</variation>
    <location>
        <position position="798"/>
    </location>
</feature>
<feature type="mutagenesis site" description="Impaired ATP binding." evidence="6">
    <original>K</original>
    <variation>W</variation>
    <location>
        <position position="798"/>
    </location>
</feature>
<dbReference type="EC" id="2.7.11.1" evidence="6"/>
<dbReference type="EMBL" id="KF531634">
    <property type="protein sequence ID" value="AGT59499.1"/>
    <property type="molecule type" value="mRNA"/>
</dbReference>
<dbReference type="EMBL" id="AL080282">
    <property type="protein sequence ID" value="CAB45889.1"/>
    <property type="status" value="ALT_SEQ"/>
    <property type="molecule type" value="Genomic_DNA"/>
</dbReference>
<dbReference type="EMBL" id="AL161554">
    <property type="protein sequence ID" value="CAB79094.1"/>
    <property type="status" value="ALT_SEQ"/>
    <property type="molecule type" value="Genomic_DNA"/>
</dbReference>
<dbReference type="EMBL" id="CP002687">
    <property type="protein sequence ID" value="AEE84378.2"/>
    <property type="status" value="ALT_INIT"/>
    <property type="molecule type" value="Genomic_DNA"/>
</dbReference>
<dbReference type="EMBL" id="FJ708750">
    <property type="protein sequence ID" value="ACN59344.1"/>
    <property type="molecule type" value="mRNA"/>
</dbReference>
<dbReference type="PIR" id="T10636">
    <property type="entry name" value="T10636"/>
</dbReference>
<dbReference type="RefSeq" id="NP_001320016.1">
    <property type="nucleotide sequence ID" value="NM_001341467.1"/>
</dbReference>
<dbReference type="SMR" id="C0LGQ9"/>
<dbReference type="BioGRID" id="13133">
    <property type="interactions" value="48"/>
</dbReference>
<dbReference type="IntAct" id="C0LGQ9">
    <property type="interactions" value="48"/>
</dbReference>
<dbReference type="STRING" id="3702.C0LGQ9"/>
<dbReference type="TCDB" id="1.A.87.2.4">
    <property type="family name" value="the mechanosensitive calcium channel (mca) family"/>
</dbReference>
<dbReference type="GlyCosmos" id="C0LGQ9">
    <property type="glycosylation" value="14 sites, No reported glycans"/>
</dbReference>
<dbReference type="GlyGen" id="C0LGQ9">
    <property type="glycosylation" value="14 sites"/>
</dbReference>
<dbReference type="iPTMnet" id="C0LGQ9"/>
<dbReference type="PaxDb" id="3702-AT4G20940.1"/>
<dbReference type="ProteomicsDB" id="242849"/>
<dbReference type="GeneID" id="827842"/>
<dbReference type="KEGG" id="ath:AT4G20940"/>
<dbReference type="Araport" id="AT4G20940"/>
<dbReference type="TAIR" id="AT4G20940">
    <property type="gene designation" value="GHR1"/>
</dbReference>
<dbReference type="eggNOG" id="ENOG502QUKN">
    <property type="taxonomic scope" value="Eukaryota"/>
</dbReference>
<dbReference type="InParanoid" id="C0LGQ9"/>
<dbReference type="OrthoDB" id="424823at2759"/>
<dbReference type="PhylomeDB" id="C0LGQ9"/>
<dbReference type="PRO" id="PR:C0LGQ9"/>
<dbReference type="Proteomes" id="UP000006548">
    <property type="component" value="Chromosome 4"/>
</dbReference>
<dbReference type="ExpressionAtlas" id="C0LGQ9">
    <property type="expression patterns" value="baseline and differential"/>
</dbReference>
<dbReference type="GO" id="GO:0005886">
    <property type="term" value="C:plasma membrane"/>
    <property type="evidence" value="ECO:0000314"/>
    <property type="project" value="UniProtKB"/>
</dbReference>
<dbReference type="GO" id="GO:0005524">
    <property type="term" value="F:ATP binding"/>
    <property type="evidence" value="ECO:0007669"/>
    <property type="project" value="UniProtKB-KW"/>
</dbReference>
<dbReference type="GO" id="GO:0004672">
    <property type="term" value="F:protein kinase activity"/>
    <property type="evidence" value="ECO:0000314"/>
    <property type="project" value="UniProtKB"/>
</dbReference>
<dbReference type="GO" id="GO:0106310">
    <property type="term" value="F:protein serine kinase activity"/>
    <property type="evidence" value="ECO:0007669"/>
    <property type="project" value="RHEA"/>
</dbReference>
<dbReference type="GO" id="GO:0004674">
    <property type="term" value="F:protein serine/threonine kinase activity"/>
    <property type="evidence" value="ECO:0007669"/>
    <property type="project" value="UniProtKB-KW"/>
</dbReference>
<dbReference type="GO" id="GO:0009738">
    <property type="term" value="P:abscisic acid-activated signaling pathway"/>
    <property type="evidence" value="ECO:0007669"/>
    <property type="project" value="UniProtKB-KW"/>
</dbReference>
<dbReference type="GO" id="GO:0071485">
    <property type="term" value="P:cellular response to absence of light"/>
    <property type="evidence" value="ECO:0000315"/>
    <property type="project" value="UniProtKB"/>
</dbReference>
<dbReference type="GO" id="GO:0071244">
    <property type="term" value="P:cellular response to carbon dioxide"/>
    <property type="evidence" value="ECO:0000315"/>
    <property type="project" value="UniProtKB"/>
</dbReference>
<dbReference type="GO" id="GO:0009789">
    <property type="term" value="P:positive regulation of abscisic acid-activated signaling pathway"/>
    <property type="evidence" value="ECO:0000315"/>
    <property type="project" value="UniProtKB"/>
</dbReference>
<dbReference type="GO" id="GO:0090333">
    <property type="term" value="P:regulation of stomatal closure"/>
    <property type="evidence" value="ECO:0000315"/>
    <property type="project" value="UniProtKB"/>
</dbReference>
<dbReference type="GO" id="GO:0009737">
    <property type="term" value="P:response to abscisic acid"/>
    <property type="evidence" value="ECO:0000315"/>
    <property type="project" value="UniProtKB"/>
</dbReference>
<dbReference type="GO" id="GO:0009416">
    <property type="term" value="P:response to light stimulus"/>
    <property type="evidence" value="ECO:0000315"/>
    <property type="project" value="UniProtKB"/>
</dbReference>
<dbReference type="FunFam" id="3.30.200.20:FF:000486">
    <property type="entry name" value="Leucine-rich repeat receptor-like protein kinase"/>
    <property type="match status" value="1"/>
</dbReference>
<dbReference type="FunFam" id="3.80.10.10:FF:000625">
    <property type="entry name" value="Leucine-rich repeat receptor-like protein kinase"/>
    <property type="match status" value="1"/>
</dbReference>
<dbReference type="FunFam" id="3.80.10.10:FF:000686">
    <property type="entry name" value="LRR receptor-like serine/threonine-protein kinase GHR1"/>
    <property type="match status" value="1"/>
</dbReference>
<dbReference type="FunFam" id="1.10.510.10:FF:000480">
    <property type="entry name" value="Pollen receptor-like kinase 1"/>
    <property type="match status" value="1"/>
</dbReference>
<dbReference type="Gene3D" id="3.30.200.20">
    <property type="entry name" value="Phosphorylase Kinase, domain 1"/>
    <property type="match status" value="1"/>
</dbReference>
<dbReference type="Gene3D" id="3.80.10.10">
    <property type="entry name" value="Ribonuclease Inhibitor"/>
    <property type="match status" value="2"/>
</dbReference>
<dbReference type="Gene3D" id="1.10.510.10">
    <property type="entry name" value="Transferase(Phosphotransferase) domain 1"/>
    <property type="match status" value="1"/>
</dbReference>
<dbReference type="InterPro" id="IPR053059">
    <property type="entry name" value="Inactive_SerThr-Kinase_ABA"/>
</dbReference>
<dbReference type="InterPro" id="IPR011009">
    <property type="entry name" value="Kinase-like_dom_sf"/>
</dbReference>
<dbReference type="InterPro" id="IPR001611">
    <property type="entry name" value="Leu-rich_rpt"/>
</dbReference>
<dbReference type="InterPro" id="IPR003591">
    <property type="entry name" value="Leu-rich_rpt_typical-subtyp"/>
</dbReference>
<dbReference type="InterPro" id="IPR032675">
    <property type="entry name" value="LRR_dom_sf"/>
</dbReference>
<dbReference type="InterPro" id="IPR013210">
    <property type="entry name" value="LRR_N_plant-typ"/>
</dbReference>
<dbReference type="InterPro" id="IPR055414">
    <property type="entry name" value="LRR_R13L4/SHOC2-like"/>
</dbReference>
<dbReference type="InterPro" id="IPR000719">
    <property type="entry name" value="Prot_kinase_dom"/>
</dbReference>
<dbReference type="InterPro" id="IPR001245">
    <property type="entry name" value="Ser-Thr/Tyr_kinase_cat_dom"/>
</dbReference>
<dbReference type="PANTHER" id="PTHR48003:SF4">
    <property type="entry name" value="LRR RECEPTOR-LIKE SERINE_THREONINE-PROTEIN KINASE GHR1"/>
    <property type="match status" value="1"/>
</dbReference>
<dbReference type="PANTHER" id="PTHR48003">
    <property type="entry name" value="OS07G0626500 PROTEIN"/>
    <property type="match status" value="1"/>
</dbReference>
<dbReference type="Pfam" id="PF00560">
    <property type="entry name" value="LRR_1"/>
    <property type="match status" value="6"/>
</dbReference>
<dbReference type="Pfam" id="PF23598">
    <property type="entry name" value="LRR_14"/>
    <property type="match status" value="1"/>
</dbReference>
<dbReference type="Pfam" id="PF13855">
    <property type="entry name" value="LRR_8"/>
    <property type="match status" value="2"/>
</dbReference>
<dbReference type="Pfam" id="PF08263">
    <property type="entry name" value="LRRNT_2"/>
    <property type="match status" value="1"/>
</dbReference>
<dbReference type="Pfam" id="PF07714">
    <property type="entry name" value="PK_Tyr_Ser-Thr"/>
    <property type="match status" value="1"/>
</dbReference>
<dbReference type="SMART" id="SM00369">
    <property type="entry name" value="LRR_TYP"/>
    <property type="match status" value="8"/>
</dbReference>
<dbReference type="SUPFAM" id="SSF52058">
    <property type="entry name" value="L domain-like"/>
    <property type="match status" value="2"/>
</dbReference>
<dbReference type="SUPFAM" id="SSF56112">
    <property type="entry name" value="Protein kinase-like (PK-like)"/>
    <property type="match status" value="1"/>
</dbReference>
<dbReference type="PROSITE" id="PS50011">
    <property type="entry name" value="PROTEIN_KINASE_DOM"/>
    <property type="match status" value="1"/>
</dbReference>
<comment type="function">
    <text evidence="6 7 8 9">Receptor kinase acting as an early component in abscisic acid (ABA) signaling (PubMed:22730405). Required for darkness, ABA, high CO(2) and hydrogen peroxide (H(2)O(2)) induction of S-type anion currents in guard cells leading to stomatal closure, possibly via the phosphorylation and activation of the anion channel SLAC1 and as a scaffolding component (PubMed:22730405, PubMed:27694184, PubMed:30361234). Seems to act in parallel with SRK2E/OST1 in the ABA signaling pathway which regulates stomatal movement (PubMed:22730405). Binds ATP (PubMed:30361234). Involved in the local and/or systemic stomatal responses (e.g. stomatal closure) to light stress (PubMed:29463779).</text>
</comment>
<comment type="catalytic activity">
    <reaction evidence="6">
        <text>L-seryl-[protein] + ATP = O-phospho-L-seryl-[protein] + ADP + H(+)</text>
        <dbReference type="Rhea" id="RHEA:17989"/>
        <dbReference type="Rhea" id="RHEA-COMP:9863"/>
        <dbReference type="Rhea" id="RHEA-COMP:11604"/>
        <dbReference type="ChEBI" id="CHEBI:15378"/>
        <dbReference type="ChEBI" id="CHEBI:29999"/>
        <dbReference type="ChEBI" id="CHEBI:30616"/>
        <dbReference type="ChEBI" id="CHEBI:83421"/>
        <dbReference type="ChEBI" id="CHEBI:456216"/>
        <dbReference type="EC" id="2.7.11.1"/>
    </reaction>
</comment>
<comment type="catalytic activity">
    <reaction evidence="6">
        <text>L-threonyl-[protein] + ATP = O-phospho-L-threonyl-[protein] + ADP + H(+)</text>
        <dbReference type="Rhea" id="RHEA:46608"/>
        <dbReference type="Rhea" id="RHEA-COMP:11060"/>
        <dbReference type="Rhea" id="RHEA-COMP:11605"/>
        <dbReference type="ChEBI" id="CHEBI:15378"/>
        <dbReference type="ChEBI" id="CHEBI:30013"/>
        <dbReference type="ChEBI" id="CHEBI:30616"/>
        <dbReference type="ChEBI" id="CHEBI:61977"/>
        <dbReference type="ChEBI" id="CHEBI:456216"/>
        <dbReference type="EC" id="2.7.11.1"/>
    </reaction>
</comment>
<comment type="activity regulation">
    <text evidence="6">Negatively regulated by ABI2.</text>
</comment>
<comment type="subunit">
    <text evidence="6 9">Interacts with SLAC1 (via N-terminus) (PubMed:22730405, PubMed:30361234). Binds to ABI2, but not ABI1 (PubMed:22730405). Interacts with CPK3 (PubMed:30361234).</text>
</comment>
<comment type="interaction">
    <interactant intactId="EBI-16939160">
        <id>C0LGQ9</id>
    </interactant>
    <interactant intactId="EBI-16946048">
        <id>C0LGL4</id>
        <label>At2g28960</label>
    </interactant>
    <organismsDiffer>false</organismsDiffer>
    <experiments>2</experiments>
</comment>
<comment type="subcellular location">
    <subcellularLocation>
        <location evidence="6 9">Cell membrane</location>
        <topology evidence="1">Single-pass type I membrane protein</topology>
    </subcellularLocation>
</comment>
<comment type="tissue specificity">
    <text evidence="6 9">Expressed in guard cells and in the vasculature of roots and leaves.</text>
</comment>
<comment type="domain">
    <text evidence="2 11">The protein kinase domain is predicted to be catalytically inactive.</text>
</comment>
<comment type="PTM">
    <text evidence="7 9">Phosphorylated by HT1; this phosphorylation is inhibited by MPK12 and MPK4.</text>
</comment>
<comment type="disruption phenotype">
    <text evidence="6 7 8 9">No visible phenotype under normal growth conditions but early wilting (PubMed:22730405). Increased sensitivity to drought stress due to impaired stomatal closure and increased water loss (PubMed:22730405). Abolished CO(2)-mediated and darkness-induced stomatal closure (PubMed:27694184). Defective abscisic acid (ABA) and hydrogen peroxide (H(2)O(2)) induction of stomatal closure associated with an impaired activation of S-type anion currents in guard cells (PubMed:22730405). Impaired stomatal closure after treatment with methyl jasmonate (MeJA), salicylic acid (SA) and flagellin 22 (Flg22) (PubMed:29463779). Altered ABA-mediated inhibition of light-induced stomatal opening (PubMed:22730405). Apoplastic ROS-sensitive plants exhibiting severe tissue damage when exposed to ozone (O3) (PubMed:30361234).</text>
</comment>
<comment type="similarity">
    <text evidence="2">Belongs to the protein kinase superfamily. Ser/Thr protein kinase family.</text>
</comment>
<comment type="caution">
    <text evidence="13 14">Exhibits protein kinase activity according to PubMed:22730405, but in contradiction, described as an inactive pseudokinase by PubMed:30361234.</text>
</comment>
<comment type="sequence caution" evidence="12">
    <conflict type="erroneous initiation">
        <sequence resource="EMBL-CDS" id="AEE84378"/>
    </conflict>
    <text>Truncated N-terminus.</text>
</comment>
<comment type="sequence caution" evidence="12">
    <conflict type="erroneous gene model prediction">
        <sequence resource="EMBL-CDS" id="CAB45889"/>
    </conflict>
</comment>
<comment type="sequence caution" evidence="12">
    <conflict type="erroneous gene model prediction">
        <sequence resource="EMBL-CDS" id="CAB79094"/>
    </conflict>
</comment>
<reference key="1">
    <citation type="journal article" date="2012" name="Plant Cell">
        <title>A plasma membrane receptor kinase, GHR1, mediates abscisic acid- and hydrogen peroxide-regulated stomatal movement in Arabidopsis.</title>
        <authorList>
            <person name="Hua D."/>
            <person name="Wang C."/>
            <person name="He J."/>
            <person name="Liao H."/>
            <person name="Duan Y."/>
            <person name="Zhu Z."/>
            <person name="Guo Y."/>
            <person name="Chen Z."/>
            <person name="Gong Z."/>
        </authorList>
    </citation>
    <scope>NUCLEOTIDE SEQUENCE [MRNA]</scope>
    <scope>FUNCTION</scope>
    <scope>DISRUPTION PHENOTYPE</scope>
    <scope>MUTAGENESIS OF CYS-57; CYS-66; CYS-381 AND LYS-798</scope>
    <scope>CATALYTIC ACTIVITY</scope>
    <scope>TISSUE SPECIFICITY</scope>
    <scope>INTERACTION WITH SLAC1 AND ABI2</scope>
    <scope>SUBCELLULAR LOCATION</scope>
    <scope>ACTIVITY REGULATION</scope>
    <source>
        <strain>cv. Columbia</strain>
    </source>
</reference>
<reference key="2">
    <citation type="journal article" date="1999" name="Nature">
        <title>Sequence and analysis of chromosome 4 of the plant Arabidopsis thaliana.</title>
        <authorList>
            <person name="Mayer K.F.X."/>
            <person name="Schueller C."/>
            <person name="Wambutt R."/>
            <person name="Murphy G."/>
            <person name="Volckaert G."/>
            <person name="Pohl T."/>
            <person name="Duesterhoeft A."/>
            <person name="Stiekema W."/>
            <person name="Entian K.-D."/>
            <person name="Terryn N."/>
            <person name="Harris B."/>
            <person name="Ansorge W."/>
            <person name="Brandt P."/>
            <person name="Grivell L.A."/>
            <person name="Rieger M."/>
            <person name="Weichselgartner M."/>
            <person name="de Simone V."/>
            <person name="Obermaier B."/>
            <person name="Mache R."/>
            <person name="Mueller M."/>
            <person name="Kreis M."/>
            <person name="Delseny M."/>
            <person name="Puigdomenech P."/>
            <person name="Watson M."/>
            <person name="Schmidtheini T."/>
            <person name="Reichert B."/>
            <person name="Portetelle D."/>
            <person name="Perez-Alonso M."/>
            <person name="Boutry M."/>
            <person name="Bancroft I."/>
            <person name="Vos P."/>
            <person name="Hoheisel J."/>
            <person name="Zimmermann W."/>
            <person name="Wedler H."/>
            <person name="Ridley P."/>
            <person name="Langham S.-A."/>
            <person name="McCullagh B."/>
            <person name="Bilham L."/>
            <person name="Robben J."/>
            <person name="van der Schueren J."/>
            <person name="Grymonprez B."/>
            <person name="Chuang Y.-J."/>
            <person name="Vandenbussche F."/>
            <person name="Braeken M."/>
            <person name="Weltjens I."/>
            <person name="Voet M."/>
            <person name="Bastiaens I."/>
            <person name="Aert R."/>
            <person name="Defoor E."/>
            <person name="Weitzenegger T."/>
            <person name="Bothe G."/>
            <person name="Ramsperger U."/>
            <person name="Hilbert H."/>
            <person name="Braun M."/>
            <person name="Holzer E."/>
            <person name="Brandt A."/>
            <person name="Peters S."/>
            <person name="van Staveren M."/>
            <person name="Dirkse W."/>
            <person name="Mooijman P."/>
            <person name="Klein Lankhorst R."/>
            <person name="Rose M."/>
            <person name="Hauf J."/>
            <person name="Koetter P."/>
            <person name="Berneiser S."/>
            <person name="Hempel S."/>
            <person name="Feldpausch M."/>
            <person name="Lamberth S."/>
            <person name="Van den Daele H."/>
            <person name="De Keyser A."/>
            <person name="Buysshaert C."/>
            <person name="Gielen J."/>
            <person name="Villarroel R."/>
            <person name="De Clercq R."/>
            <person name="van Montagu M."/>
            <person name="Rogers J."/>
            <person name="Cronin A."/>
            <person name="Quail M.A."/>
            <person name="Bray-Allen S."/>
            <person name="Clark L."/>
            <person name="Doggett J."/>
            <person name="Hall S."/>
            <person name="Kay M."/>
            <person name="Lennard N."/>
            <person name="McLay K."/>
            <person name="Mayes R."/>
            <person name="Pettett A."/>
            <person name="Rajandream M.A."/>
            <person name="Lyne M."/>
            <person name="Benes V."/>
            <person name="Rechmann S."/>
            <person name="Borkova D."/>
            <person name="Bloecker H."/>
            <person name="Scharfe M."/>
            <person name="Grimm M."/>
            <person name="Loehnert T.-H."/>
            <person name="Dose S."/>
            <person name="de Haan M."/>
            <person name="Maarse A.C."/>
            <person name="Schaefer M."/>
            <person name="Mueller-Auer S."/>
            <person name="Gabel C."/>
            <person name="Fuchs M."/>
            <person name="Fartmann B."/>
            <person name="Granderath K."/>
            <person name="Dauner D."/>
            <person name="Herzl A."/>
            <person name="Neumann S."/>
            <person name="Argiriou A."/>
            <person name="Vitale D."/>
            <person name="Liguori R."/>
            <person name="Piravandi E."/>
            <person name="Massenet O."/>
            <person name="Quigley F."/>
            <person name="Clabauld G."/>
            <person name="Muendlein A."/>
            <person name="Felber R."/>
            <person name="Schnabl S."/>
            <person name="Hiller R."/>
            <person name="Schmidt W."/>
            <person name="Lecharny A."/>
            <person name="Aubourg S."/>
            <person name="Chefdor F."/>
            <person name="Cooke R."/>
            <person name="Berger C."/>
            <person name="Monfort A."/>
            <person name="Casacuberta E."/>
            <person name="Gibbons T."/>
            <person name="Weber N."/>
            <person name="Vandenbol M."/>
            <person name="Bargues M."/>
            <person name="Terol J."/>
            <person name="Torres A."/>
            <person name="Perez-Perez A."/>
            <person name="Purnelle B."/>
            <person name="Bent E."/>
            <person name="Johnson S."/>
            <person name="Tacon D."/>
            <person name="Jesse T."/>
            <person name="Heijnen L."/>
            <person name="Schwarz S."/>
            <person name="Scholler P."/>
            <person name="Heber S."/>
            <person name="Francs P."/>
            <person name="Bielke C."/>
            <person name="Frishman D."/>
            <person name="Haase D."/>
            <person name="Lemcke K."/>
            <person name="Mewes H.-W."/>
            <person name="Stocker S."/>
            <person name="Zaccaria P."/>
            <person name="Bevan M."/>
            <person name="Wilson R.K."/>
            <person name="de la Bastide M."/>
            <person name="Habermann K."/>
            <person name="Parnell L."/>
            <person name="Dedhia N."/>
            <person name="Gnoj L."/>
            <person name="Schutz K."/>
            <person name="Huang E."/>
            <person name="Spiegel L."/>
            <person name="Sekhon M."/>
            <person name="Murray J."/>
            <person name="Sheet P."/>
            <person name="Cordes M."/>
            <person name="Abu-Threideh J."/>
            <person name="Stoneking T."/>
            <person name="Kalicki J."/>
            <person name="Graves T."/>
            <person name="Harmon G."/>
            <person name="Edwards J."/>
            <person name="Latreille P."/>
            <person name="Courtney L."/>
            <person name="Cloud J."/>
            <person name="Abbott A."/>
            <person name="Scott K."/>
            <person name="Johnson D."/>
            <person name="Minx P."/>
            <person name="Bentley D."/>
            <person name="Fulton B."/>
            <person name="Miller N."/>
            <person name="Greco T."/>
            <person name="Kemp K."/>
            <person name="Kramer J."/>
            <person name="Fulton L."/>
            <person name="Mardis E."/>
            <person name="Dante M."/>
            <person name="Pepin K."/>
            <person name="Hillier L.W."/>
            <person name="Nelson J."/>
            <person name="Spieth J."/>
            <person name="Ryan E."/>
            <person name="Andrews S."/>
            <person name="Geisel C."/>
            <person name="Layman D."/>
            <person name="Du H."/>
            <person name="Ali J."/>
            <person name="Berghoff A."/>
            <person name="Jones K."/>
            <person name="Drone K."/>
            <person name="Cotton M."/>
            <person name="Joshu C."/>
            <person name="Antonoiu B."/>
            <person name="Zidanic M."/>
            <person name="Strong C."/>
            <person name="Sun H."/>
            <person name="Lamar B."/>
            <person name="Yordan C."/>
            <person name="Ma P."/>
            <person name="Zhong J."/>
            <person name="Preston R."/>
            <person name="Vil D."/>
            <person name="Shekher M."/>
            <person name="Matero A."/>
            <person name="Shah R."/>
            <person name="Swaby I.K."/>
            <person name="O'Shaughnessy A."/>
            <person name="Rodriguez M."/>
            <person name="Hoffman J."/>
            <person name="Till S."/>
            <person name="Granat S."/>
            <person name="Shohdy N."/>
            <person name="Hasegawa A."/>
            <person name="Hameed A."/>
            <person name="Lodhi M."/>
            <person name="Johnson A."/>
            <person name="Chen E."/>
            <person name="Marra M.A."/>
            <person name="Martienssen R."/>
            <person name="McCombie W.R."/>
        </authorList>
    </citation>
    <scope>NUCLEOTIDE SEQUENCE [LARGE SCALE GENOMIC DNA]</scope>
    <source>
        <strain>cv. Columbia</strain>
    </source>
</reference>
<reference key="3">
    <citation type="journal article" date="2017" name="Plant J.">
        <title>Araport11: a complete reannotation of the Arabidopsis thaliana reference genome.</title>
        <authorList>
            <person name="Cheng C.Y."/>
            <person name="Krishnakumar V."/>
            <person name="Chan A.P."/>
            <person name="Thibaud-Nissen F."/>
            <person name="Schobel S."/>
            <person name="Town C.D."/>
        </authorList>
    </citation>
    <scope>GENOME REANNOTATION</scope>
    <source>
        <strain>cv. Columbia</strain>
    </source>
</reference>
<reference key="4">
    <citation type="journal article" date="2010" name="BMC Genomics">
        <title>Genome-wide cloning and sequence analysis of leucine-rich repeat receptor-like protein kinase genes in Arabidopsis thaliana.</title>
        <authorList>
            <person name="Gou X."/>
            <person name="He K."/>
            <person name="Yang H."/>
            <person name="Yuan T."/>
            <person name="Lin H."/>
            <person name="Clouse S.D."/>
            <person name="Li J."/>
        </authorList>
    </citation>
    <scope>NUCLEOTIDE SEQUENCE [LARGE SCALE MRNA] OF 17-1053</scope>
    <source>
        <strain>cv. Columbia</strain>
    </source>
</reference>
<reference key="5">
    <citation type="journal article" date="2009" name="Plant Physiol.">
        <title>Large-scale Arabidopsis phosphoproteome profiling reveals novel chloroplast kinase substrates and phosphorylation networks.</title>
        <authorList>
            <person name="Reiland S."/>
            <person name="Messerli G."/>
            <person name="Baerenfaller K."/>
            <person name="Gerrits B."/>
            <person name="Endler A."/>
            <person name="Grossmann J."/>
            <person name="Gruissem W."/>
            <person name="Baginsky S."/>
        </authorList>
    </citation>
    <scope>PHOSPHORYLATION [LARGE SCALE ANALYSIS] AT SER-704</scope>
    <scope>IDENTIFICATION BY MASS SPECTROMETRY [LARGE SCALE ANALYSIS]</scope>
</reference>
<reference key="6">
    <citation type="journal article" date="2016" name="Plant Cell">
        <title>A dominant mutation in the HT1 kinase uncovers roles of MAP kinases and GHR1 in CO2-induced stomatal closure.</title>
        <authorList>
            <person name="Horak H."/>
            <person name="Sierla M."/>
            <person name="Toldsepp K."/>
            <person name="Wang C."/>
            <person name="Wang Y.-S."/>
            <person name="Nuhkat M."/>
            <person name="Valk E."/>
            <person name="Pechter P."/>
            <person name="Merilo E."/>
            <person name="Salojaervi J."/>
            <person name="Overmyer K."/>
            <person name="Loog M."/>
            <person name="Brosche M."/>
            <person name="Schroeder J.I."/>
            <person name="Kangasjaervi J."/>
            <person name="Kollist H."/>
        </authorList>
    </citation>
    <scope>FUNCTION</scope>
    <scope>DISRUPTION PHENOTYPE</scope>
    <scope>PHOSPHORYLATION</scope>
    <source>
        <strain>cv. Columbia</strain>
    </source>
</reference>
<reference key="7">
    <citation type="journal article" date="2018" name="Plant Cell">
        <title>The receptor-like pseudokinase GHR1 is required for stomatal closure.</title>
        <authorList>
            <person name="Sierla M."/>
            <person name="Horak H."/>
            <person name="Overmyer K."/>
            <person name="Waszczak C."/>
            <person name="Yarmolinsky D."/>
            <person name="Maierhofer T."/>
            <person name="Vainonen J.P."/>
            <person name="Denessiouk K."/>
            <person name="Salojaervi J."/>
            <person name="Laanemets K."/>
            <person name="Toldsepp K."/>
            <person name="Vahisalu T."/>
            <person name="Gauthier A."/>
            <person name="Puukko T."/>
            <person name="Paulin L."/>
            <person name="Auvinen P."/>
            <person name="Geiger D."/>
            <person name="Hedrich R."/>
            <person name="Kollist H."/>
            <person name="Kangasjaervi J."/>
        </authorList>
    </citation>
    <scope>FUNCTION</scope>
    <scope>DISRUPTION PHENOTYPE</scope>
    <scope>MUTAGENESIS OF GLY-56; GLY-63; GLY-108; ASP-220; ASP-293; ALA-618; ALA-637; SER-680 AND LYS-798</scope>
    <scope>INTERACTION WITH CPK3 AND SLAC1</scope>
    <scope>SUBCELLULAR LOCATION</scope>
    <scope>TISSUE SPECIFICITY</scope>
    <scope>PHOSPHORYLATION AT SER-100; SER-102; SER-105; SER-126; SER-262; SER-278; THR-280; SER-281; SER-325; TYR-406; SER-410; THR-415; SER-417; SER-434; SER-613; SER-614; SER-616; THR-669; THR-675; SER-678; SER-680; SER-698; SER-699; SER-700; THR-713; SER-716; SER-718; THR-720; SER-721; SER-724; SER-760; THR-764; SER-769; THR-928; THR-1010; SER-1015; THR-1045; TYR-1047; SER-1051 AND SER-1052</scope>
    <source>
        <strain>cv. Columbia</strain>
        <strain>cv. Columbia GL1</strain>
    </source>
</reference>
<reference key="8">
    <citation type="journal article" date="2018" name="Sci. Signal.">
        <title>Coordinating the overall stomatal response of plants: Rapid leaf-to-leaf communication during light stress.</title>
        <authorList>
            <person name="Devireddy A.R."/>
            <person name="Zandalinas S.I."/>
            <person name="Gomez-Cadenas A."/>
            <person name="Blumwald E."/>
            <person name="Mittler R."/>
        </authorList>
    </citation>
    <scope>FUNCTION</scope>
</reference>
<proteinExistence type="evidence at protein level"/>
<evidence type="ECO:0000255" key="1"/>
<evidence type="ECO:0000255" key="2">
    <source>
        <dbReference type="PROSITE-ProRule" id="PRU00159"/>
    </source>
</evidence>
<evidence type="ECO:0000255" key="3">
    <source>
        <dbReference type="PROSITE-ProRule" id="PRU00498"/>
    </source>
</evidence>
<evidence type="ECO:0000256" key="4">
    <source>
        <dbReference type="SAM" id="MobiDB-lite"/>
    </source>
</evidence>
<evidence type="ECO:0000269" key="5">
    <source>
    </source>
</evidence>
<evidence type="ECO:0000269" key="6">
    <source>
    </source>
</evidence>
<evidence type="ECO:0000269" key="7">
    <source>
    </source>
</evidence>
<evidence type="ECO:0000269" key="8">
    <source>
    </source>
</evidence>
<evidence type="ECO:0000269" key="9">
    <source>
    </source>
</evidence>
<evidence type="ECO:0000303" key="10">
    <source>
    </source>
</evidence>
<evidence type="ECO:0000303" key="11">
    <source>
    </source>
</evidence>
<evidence type="ECO:0000305" key="12"/>
<evidence type="ECO:0000305" key="13">
    <source>
    </source>
</evidence>
<evidence type="ECO:0000305" key="14">
    <source>
    </source>
</evidence>
<evidence type="ECO:0000312" key="15">
    <source>
        <dbReference type="Araport" id="AT4G20940"/>
    </source>
</evidence>
<evidence type="ECO:0000312" key="16">
    <source>
        <dbReference type="EMBL" id="CAB45889.1"/>
    </source>
</evidence>
<keyword id="KW-0938">Abscisic acid signaling pathway</keyword>
<keyword id="KW-0067">ATP-binding</keyword>
<keyword id="KW-1003">Cell membrane</keyword>
<keyword id="KW-0325">Glycoprotein</keyword>
<keyword id="KW-0418">Kinase</keyword>
<keyword id="KW-0433">Leucine-rich repeat</keyword>
<keyword id="KW-0472">Membrane</keyword>
<keyword id="KW-0547">Nucleotide-binding</keyword>
<keyword id="KW-0597">Phosphoprotein</keyword>
<keyword id="KW-0675">Receptor</keyword>
<keyword id="KW-1185">Reference proteome</keyword>
<keyword id="KW-0677">Repeat</keyword>
<keyword id="KW-0723">Serine/threonine-protein kinase</keyword>
<keyword id="KW-0732">Signal</keyword>
<keyword id="KW-0346">Stress response</keyword>
<keyword id="KW-0808">Transferase</keyword>
<keyword id="KW-0812">Transmembrane</keyword>
<keyword id="KW-1133">Transmembrane helix</keyword>
<organism>
    <name type="scientific">Arabidopsis thaliana</name>
    <name type="common">Mouse-ear cress</name>
    <dbReference type="NCBI Taxonomy" id="3702"/>
    <lineage>
        <taxon>Eukaryota</taxon>
        <taxon>Viridiplantae</taxon>
        <taxon>Streptophyta</taxon>
        <taxon>Embryophyta</taxon>
        <taxon>Tracheophyta</taxon>
        <taxon>Spermatophyta</taxon>
        <taxon>Magnoliopsida</taxon>
        <taxon>eudicotyledons</taxon>
        <taxon>Gunneridae</taxon>
        <taxon>Pentapetalae</taxon>
        <taxon>rosids</taxon>
        <taxon>malvids</taxon>
        <taxon>Brassicales</taxon>
        <taxon>Brassicaceae</taxon>
        <taxon>Camelineae</taxon>
        <taxon>Arabidopsis</taxon>
    </lineage>
</organism>
<name>GHR1_ARATH</name>